<evidence type="ECO:0000250" key="1"/>
<evidence type="ECO:0000255" key="2">
    <source>
        <dbReference type="PROSITE-ProRule" id="PRU00126"/>
    </source>
</evidence>
<evidence type="ECO:0000256" key="3">
    <source>
        <dbReference type="SAM" id="MobiDB-lite"/>
    </source>
</evidence>
<evidence type="ECO:0000305" key="4"/>
<gene>
    <name type="primary">FLO8</name>
    <name type="synonym">PDH5</name>
    <name type="ORF">C1Q_03223</name>
</gene>
<accession>C7GS77</accession>
<protein>
    <recommendedName>
        <fullName>Transcriptional activator FLO8</fullName>
    </recommendedName>
    <alternativeName>
        <fullName>Protein PDH5</fullName>
    </alternativeName>
</protein>
<comment type="function">
    <text evidence="1">Required for diploid filamentous growth, haploid invasive growth and flocculation. Putative transcriptional activator of FLO1 (By similarity).</text>
</comment>
<comment type="subcellular location">
    <subcellularLocation>
        <location evidence="1">Nucleus</location>
    </subcellularLocation>
</comment>
<comment type="similarity">
    <text evidence="4">Belongs to the FLO8 family.</text>
</comment>
<keyword id="KW-0010">Activator</keyword>
<keyword id="KW-0539">Nucleus</keyword>
<keyword id="KW-0804">Transcription</keyword>
<keyword id="KW-0805">Transcription regulation</keyword>
<reference key="1">
    <citation type="journal article" date="2009" name="Genome Res.">
        <title>Genome structure of a Saccharomyces cerevisiae strain widely used in bioethanol production.</title>
        <authorList>
            <person name="Argueso J.L."/>
            <person name="Carazzolle M.F."/>
            <person name="Mieczkowski P.A."/>
            <person name="Duarte F.M."/>
            <person name="Netto O.V.C."/>
            <person name="Missawa S.K."/>
            <person name="Galzerani F."/>
            <person name="Costa G.G.L."/>
            <person name="Vidal R.O."/>
            <person name="Noronha M.F."/>
            <person name="Dominska M."/>
            <person name="Andrietta M.G.S."/>
            <person name="Andrietta S.R."/>
            <person name="Cunha A.F."/>
            <person name="Gomes L.H."/>
            <person name="Tavares F.C.A."/>
            <person name="Alcarde A.R."/>
            <person name="Dietrich F.S."/>
            <person name="McCusker J.H."/>
            <person name="Petes T.D."/>
            <person name="Pereira G.A.G."/>
        </authorList>
    </citation>
    <scope>NUCLEOTIDE SEQUENCE [LARGE SCALE GENOMIC DNA]</scope>
    <source>
        <strain>JAY291</strain>
    </source>
</reference>
<proteinExistence type="inferred from homology"/>
<sequence>MSYKVNSSYPDSIPPTEQPYMASQYKQDLQSNIAMATNSEQQRQQQQQQQQQQQQQQQWINQPTAENSDLKEKMNCKNTLNEYIFDFLTKSSLKNTAAAFAQDAHLDRDKGQNPIDGPKSKENNGNQNTFSKVVDTPQGFLYEWWQIFWDIFNTSSSRGGSEFAQQYYQLVLQEQRQEQIYRSLAVHAARLQHDAERRGEYSNEDIDPMHLAAMMLGNPMAPAVQMRNVNMNPIPIPMVGNPIVNNFSIPPYNNANPTTGATAVAPTAPPSGDFTNVGPTQNRSQNVTGWPVYNYPMQPTTENPVGNPCNNNTTNNTTNNKSPVNQPKSLKTMHSTDKPNNVPTSKSTRSRSATSKAKGKVKAGLVAKRRRKNNTATVSAGSTNAGSPNITTPGSTTSEPAMVGSRVNKTPRSDIATNFRNQAIIFGEEDIYSNSKSSPSLDGASPSALVSKQPTKVRKNTKKASTSAFPVESANKLGGNSVVTGKKRSPPNTRVSRRKSTPSVILNADATKDENNMLRTFSNTTAPNIHSAPPTKTANSLPFPGINLGSFNKPAVSSPLSSVTESCFDPESGKIAGKNGPKRAVNSKVSASSPLSIATPPSGDAQKQRSSKVPGNVVIKPPHGFSTTNLNITLKSSKIITSQNNTVSQELPNGGNILEAQVGNDSRSSKGNRNTLSTSEEKKPSSNNQGYDFDALKNPSSLLFPNQAYASNNRTPNENSNVTDETSASTNNGDNDNTLIQPSSNVGTTLGPQQTSTYENQNVHSQNLKFGNIGMVEDQGPDYDLNLLDTNENDFNFINWEG</sequence>
<feature type="chain" id="PRO_0000392095" description="Transcriptional activator FLO8">
    <location>
        <begin position="1"/>
        <end position="802"/>
    </location>
</feature>
<feature type="domain" description="LisH" evidence="2">
    <location>
        <begin position="76"/>
        <end position="108"/>
    </location>
</feature>
<feature type="region of interest" description="Disordered" evidence="3">
    <location>
        <begin position="1"/>
        <end position="20"/>
    </location>
</feature>
<feature type="region of interest" description="Disordered" evidence="3">
    <location>
        <begin position="28"/>
        <end position="71"/>
    </location>
</feature>
<feature type="region of interest" description="Disordered" evidence="3">
    <location>
        <begin position="104"/>
        <end position="130"/>
    </location>
</feature>
<feature type="region of interest" description="Disordered" evidence="3">
    <location>
        <begin position="258"/>
        <end position="409"/>
    </location>
</feature>
<feature type="region of interest" description="Disordered" evidence="3">
    <location>
        <begin position="434"/>
        <end position="506"/>
    </location>
</feature>
<feature type="region of interest" description="Disordered" evidence="3">
    <location>
        <begin position="566"/>
        <end position="625"/>
    </location>
</feature>
<feature type="region of interest" description="Disordered" evidence="3">
    <location>
        <begin position="647"/>
        <end position="757"/>
    </location>
</feature>
<feature type="compositionally biased region" description="Polar residues" evidence="3">
    <location>
        <begin position="1"/>
        <end position="10"/>
    </location>
</feature>
<feature type="compositionally biased region" description="Polar residues" evidence="3">
    <location>
        <begin position="28"/>
        <end position="40"/>
    </location>
</feature>
<feature type="compositionally biased region" description="Low complexity" evidence="3">
    <location>
        <begin position="41"/>
        <end position="58"/>
    </location>
</feature>
<feature type="compositionally biased region" description="Polar residues" evidence="3">
    <location>
        <begin position="273"/>
        <end position="288"/>
    </location>
</feature>
<feature type="compositionally biased region" description="Low complexity" evidence="3">
    <location>
        <begin position="310"/>
        <end position="320"/>
    </location>
</feature>
<feature type="compositionally biased region" description="Polar residues" evidence="3">
    <location>
        <begin position="321"/>
        <end position="343"/>
    </location>
</feature>
<feature type="compositionally biased region" description="Low complexity" evidence="3">
    <location>
        <begin position="344"/>
        <end position="356"/>
    </location>
</feature>
<feature type="compositionally biased region" description="Basic residues" evidence="3">
    <location>
        <begin position="357"/>
        <end position="373"/>
    </location>
</feature>
<feature type="compositionally biased region" description="Polar residues" evidence="3">
    <location>
        <begin position="374"/>
        <end position="399"/>
    </location>
</feature>
<feature type="compositionally biased region" description="Basic residues" evidence="3">
    <location>
        <begin position="485"/>
        <end position="500"/>
    </location>
</feature>
<feature type="compositionally biased region" description="Polar residues" evidence="3">
    <location>
        <begin position="587"/>
        <end position="596"/>
    </location>
</feature>
<feature type="compositionally biased region" description="Polar residues" evidence="3">
    <location>
        <begin position="663"/>
        <end position="678"/>
    </location>
</feature>
<feature type="compositionally biased region" description="Polar residues" evidence="3">
    <location>
        <begin position="698"/>
        <end position="757"/>
    </location>
</feature>
<name>FLO8_YEAS2</name>
<dbReference type="EMBL" id="ACFL01000174">
    <property type="protein sequence ID" value="EEU06340.1"/>
    <property type="molecule type" value="Genomic_DNA"/>
</dbReference>
<dbReference type="SMR" id="C7GS77"/>
<dbReference type="OrthoDB" id="41300at4893"/>
<dbReference type="Proteomes" id="UP000008073">
    <property type="component" value="Unassembled WGS sequence"/>
</dbReference>
<dbReference type="GO" id="GO:0005634">
    <property type="term" value="C:nucleus"/>
    <property type="evidence" value="ECO:0007669"/>
    <property type="project" value="UniProtKB-SubCell"/>
</dbReference>
<dbReference type="GO" id="GO:0009889">
    <property type="term" value="P:regulation of biosynthetic process"/>
    <property type="evidence" value="ECO:0007669"/>
    <property type="project" value="UniProtKB-ARBA"/>
</dbReference>
<dbReference type="InterPro" id="IPR006594">
    <property type="entry name" value="LisH"/>
</dbReference>
<dbReference type="PANTHER" id="PTHR45093:SF2">
    <property type="entry name" value="LISH DOMAIN-CONTAINING PROTEIN"/>
    <property type="match status" value="1"/>
</dbReference>
<dbReference type="PANTHER" id="PTHR45093">
    <property type="entry name" value="TRANSCRIPTION ACTIVATOR MSS11"/>
    <property type="match status" value="1"/>
</dbReference>
<dbReference type="SMART" id="SM00667">
    <property type="entry name" value="LisH"/>
    <property type="match status" value="1"/>
</dbReference>
<dbReference type="PROSITE" id="PS50896">
    <property type="entry name" value="LISH"/>
    <property type="match status" value="1"/>
</dbReference>
<organism>
    <name type="scientific">Saccharomyces cerevisiae (strain JAY291)</name>
    <name type="common">Baker's yeast</name>
    <dbReference type="NCBI Taxonomy" id="574961"/>
    <lineage>
        <taxon>Eukaryota</taxon>
        <taxon>Fungi</taxon>
        <taxon>Dikarya</taxon>
        <taxon>Ascomycota</taxon>
        <taxon>Saccharomycotina</taxon>
        <taxon>Saccharomycetes</taxon>
        <taxon>Saccharomycetales</taxon>
        <taxon>Saccharomycetaceae</taxon>
        <taxon>Saccharomyces</taxon>
    </lineage>
</organism>